<dbReference type="EC" id="2.7.11.1"/>
<dbReference type="EMBL" id="AF032437">
    <property type="protein sequence ID" value="AAC39863.1"/>
    <property type="molecule type" value="Genomic_DNA"/>
</dbReference>
<dbReference type="EMBL" id="AK122767">
    <property type="protein sequence ID" value="BAG53717.1"/>
    <property type="molecule type" value="mRNA"/>
</dbReference>
<dbReference type="EMBL" id="CH471054">
    <property type="protein sequence ID" value="EAW97981.1"/>
    <property type="molecule type" value="Genomic_DNA"/>
</dbReference>
<dbReference type="EMBL" id="BC000833">
    <property type="protein sequence ID" value="AAH00833.1"/>
    <property type="molecule type" value="mRNA"/>
</dbReference>
<dbReference type="EMBL" id="BC041049">
    <property type="protein sequence ID" value="AAH41049.1"/>
    <property type="molecule type" value="mRNA"/>
</dbReference>
<dbReference type="EMBL" id="BC047284">
    <property type="protein sequence ID" value="AAH47284.2"/>
    <property type="molecule type" value="mRNA"/>
</dbReference>
<dbReference type="EMBL" id="AL110301">
    <property type="protein sequence ID" value="CAB53747.1"/>
    <property type="molecule type" value="mRNA"/>
</dbReference>
<dbReference type="CCDS" id="CCDS44975.1">
    <molecule id="Q8IW41-1"/>
</dbReference>
<dbReference type="CCDS" id="CCDS44976.1">
    <molecule id="Q8IW41-2"/>
</dbReference>
<dbReference type="PIR" id="T34519">
    <property type="entry name" value="T34519"/>
</dbReference>
<dbReference type="RefSeq" id="NP_003659.2">
    <molecule id="Q8IW41-2"/>
    <property type="nucleotide sequence ID" value="NM_003668.3"/>
</dbReference>
<dbReference type="RefSeq" id="NP_620777.1">
    <molecule id="Q8IW41-1"/>
    <property type="nucleotide sequence ID" value="NM_139078.3"/>
</dbReference>
<dbReference type="SMR" id="Q8IW41"/>
<dbReference type="BioGRID" id="114120">
    <property type="interactions" value="50"/>
</dbReference>
<dbReference type="CORUM" id="Q8IW41"/>
<dbReference type="FunCoup" id="Q8IW41">
    <property type="interactions" value="4503"/>
</dbReference>
<dbReference type="IntAct" id="Q8IW41">
    <property type="interactions" value="29"/>
</dbReference>
<dbReference type="MINT" id="Q8IW41"/>
<dbReference type="STRING" id="9606.ENSP00000449381"/>
<dbReference type="BindingDB" id="Q8IW41"/>
<dbReference type="ChEMBL" id="CHEMBL3094"/>
<dbReference type="DrugBank" id="DB08358">
    <property type="generic name" value="2-(2-QUINOLIN-3-YLPYRIDIN-4-YL)-1,5,6,7-TETRAHYDRO-4H-PYRROLO[3,2-C]PYRIDIN-4-ONE"/>
</dbReference>
<dbReference type="DrugBank" id="DB12010">
    <property type="generic name" value="Fostamatinib"/>
</dbReference>
<dbReference type="DrugBank" id="DB15190">
    <property type="generic name" value="GLPG-0259"/>
</dbReference>
<dbReference type="DrugCentral" id="Q8IW41"/>
<dbReference type="GuidetoPHARMACOLOGY" id="2096"/>
<dbReference type="iPTMnet" id="Q8IW41"/>
<dbReference type="PhosphoSitePlus" id="Q8IW41"/>
<dbReference type="BioMuta" id="MAPKAPK5"/>
<dbReference type="DMDM" id="52000829"/>
<dbReference type="jPOST" id="Q8IW41"/>
<dbReference type="MassIVE" id="Q8IW41"/>
<dbReference type="PaxDb" id="9606-ENSP00000449381"/>
<dbReference type="PeptideAtlas" id="Q8IW41"/>
<dbReference type="ProteomicsDB" id="70805">
    <molecule id="Q8IW41-1"/>
</dbReference>
<dbReference type="ProteomicsDB" id="70806">
    <molecule id="Q8IW41-2"/>
</dbReference>
<dbReference type="Pumba" id="Q8IW41"/>
<dbReference type="Antibodypedia" id="3873">
    <property type="antibodies" value="661 antibodies from 39 providers"/>
</dbReference>
<dbReference type="DNASU" id="8550"/>
<dbReference type="Ensembl" id="ENST00000550735.7">
    <molecule id="Q8IW41-2"/>
    <property type="protein sequence ID" value="ENSP00000449667.2"/>
    <property type="gene ID" value="ENSG00000089022.15"/>
</dbReference>
<dbReference type="Ensembl" id="ENST00000551404.7">
    <molecule id="Q8IW41-1"/>
    <property type="protein sequence ID" value="ENSP00000449381.2"/>
    <property type="gene ID" value="ENSG00000089022.15"/>
</dbReference>
<dbReference type="GeneID" id="8550"/>
<dbReference type="KEGG" id="hsa:8550"/>
<dbReference type="MANE-Select" id="ENST00000550735.7">
    <molecule id="Q8IW41-2"/>
    <property type="protein sequence ID" value="ENSP00000449667.2"/>
    <property type="RefSeq nucleotide sequence ID" value="NM_003668.4"/>
    <property type="RefSeq protein sequence ID" value="NP_003659.2"/>
</dbReference>
<dbReference type="UCSC" id="uc001tta.5">
    <molecule id="Q8IW41-1"/>
    <property type="organism name" value="human"/>
</dbReference>
<dbReference type="AGR" id="HGNC:6889"/>
<dbReference type="CTD" id="8550"/>
<dbReference type="DisGeNET" id="8550"/>
<dbReference type="GeneCards" id="MAPKAPK5"/>
<dbReference type="HGNC" id="HGNC:6889">
    <property type="gene designation" value="MAPKAPK5"/>
</dbReference>
<dbReference type="HPA" id="ENSG00000089022">
    <property type="expression patterns" value="Low tissue specificity"/>
</dbReference>
<dbReference type="MalaCards" id="MAPKAPK5"/>
<dbReference type="MIM" id="606723">
    <property type="type" value="gene"/>
</dbReference>
<dbReference type="MIM" id="619869">
    <property type="type" value="phenotype"/>
</dbReference>
<dbReference type="neXtProt" id="NX_Q8IW41"/>
<dbReference type="OpenTargets" id="ENSG00000089022"/>
<dbReference type="PharmGKB" id="PA30633"/>
<dbReference type="VEuPathDB" id="HostDB:ENSG00000089022"/>
<dbReference type="eggNOG" id="KOG0604">
    <property type="taxonomic scope" value="Eukaryota"/>
</dbReference>
<dbReference type="GeneTree" id="ENSGT00940000154089"/>
<dbReference type="HOGENOM" id="CLU_000288_63_0_1"/>
<dbReference type="InParanoid" id="Q8IW41"/>
<dbReference type="OMA" id="KPYTYDK"/>
<dbReference type="OrthoDB" id="40902at2759"/>
<dbReference type="PAN-GO" id="Q8IW41">
    <property type="GO annotations" value="10 GO annotations based on evolutionary models"/>
</dbReference>
<dbReference type="PhylomeDB" id="Q8IW41"/>
<dbReference type="TreeFam" id="TF312891"/>
<dbReference type="PathwayCommons" id="Q8IW41"/>
<dbReference type="Reactome" id="R-HSA-2559580">
    <property type="pathway name" value="Oxidative Stress Induced Senescence"/>
</dbReference>
<dbReference type="Reactome" id="R-HSA-5687128">
    <property type="pathway name" value="MAPK6/MAPK4 signaling"/>
</dbReference>
<dbReference type="Reactome" id="R-HSA-6804756">
    <property type="pathway name" value="Regulation of TP53 Activity through Phosphorylation"/>
</dbReference>
<dbReference type="SignaLink" id="Q8IW41"/>
<dbReference type="SIGNOR" id="Q8IW41"/>
<dbReference type="BioGRID-ORCS" id="8550">
    <property type="hits" value="22 hits in 1188 CRISPR screens"/>
</dbReference>
<dbReference type="CD-CODE" id="8C2F96ED">
    <property type="entry name" value="Centrosome"/>
</dbReference>
<dbReference type="ChiTaRS" id="MAPKAPK5">
    <property type="organism name" value="human"/>
</dbReference>
<dbReference type="GeneWiki" id="MAPKAPK5"/>
<dbReference type="GenomeRNAi" id="8550"/>
<dbReference type="Pharos" id="Q8IW41">
    <property type="development level" value="Tchem"/>
</dbReference>
<dbReference type="PRO" id="PR:Q8IW41"/>
<dbReference type="Proteomes" id="UP000005640">
    <property type="component" value="Chromosome 12"/>
</dbReference>
<dbReference type="RNAct" id="Q8IW41">
    <property type="molecule type" value="protein"/>
</dbReference>
<dbReference type="Bgee" id="ENSG00000089022">
    <property type="expression patterns" value="Expressed in rectum and 185 other cell types or tissues"/>
</dbReference>
<dbReference type="ExpressionAtlas" id="Q8IW41">
    <property type="expression patterns" value="baseline and differential"/>
</dbReference>
<dbReference type="GO" id="GO:0005737">
    <property type="term" value="C:cytoplasm"/>
    <property type="evidence" value="ECO:0000318"/>
    <property type="project" value="GO_Central"/>
</dbReference>
<dbReference type="GO" id="GO:0005829">
    <property type="term" value="C:cytosol"/>
    <property type="evidence" value="ECO:0000314"/>
    <property type="project" value="HPA"/>
</dbReference>
<dbReference type="GO" id="GO:0005654">
    <property type="term" value="C:nucleoplasm"/>
    <property type="evidence" value="ECO:0000314"/>
    <property type="project" value="HPA"/>
</dbReference>
<dbReference type="GO" id="GO:0005634">
    <property type="term" value="C:nucleus"/>
    <property type="evidence" value="ECO:0000318"/>
    <property type="project" value="GO_Central"/>
</dbReference>
<dbReference type="GO" id="GO:0032991">
    <property type="term" value="C:protein-containing complex"/>
    <property type="evidence" value="ECO:0007669"/>
    <property type="project" value="Ensembl"/>
</dbReference>
<dbReference type="GO" id="GO:0032156">
    <property type="term" value="C:septin cytoskeleton"/>
    <property type="evidence" value="ECO:0007669"/>
    <property type="project" value="Ensembl"/>
</dbReference>
<dbReference type="GO" id="GO:0005524">
    <property type="term" value="F:ATP binding"/>
    <property type="evidence" value="ECO:0007669"/>
    <property type="project" value="UniProtKB-KW"/>
</dbReference>
<dbReference type="GO" id="GO:0009931">
    <property type="term" value="F:calcium-dependent protein serine/threonine kinase activity"/>
    <property type="evidence" value="ECO:0000318"/>
    <property type="project" value="GO_Central"/>
</dbReference>
<dbReference type="GO" id="GO:0004683">
    <property type="term" value="F:calcium/calmodulin-dependent protein kinase activity"/>
    <property type="evidence" value="ECO:0000318"/>
    <property type="project" value="GO_Central"/>
</dbReference>
<dbReference type="GO" id="GO:0005516">
    <property type="term" value="F:calmodulin binding"/>
    <property type="evidence" value="ECO:0000318"/>
    <property type="project" value="GO_Central"/>
</dbReference>
<dbReference type="GO" id="GO:0004708">
    <property type="term" value="F:MAP kinase kinase activity"/>
    <property type="evidence" value="ECO:0000304"/>
    <property type="project" value="ProtInc"/>
</dbReference>
<dbReference type="GO" id="GO:0051019">
    <property type="term" value="F:mitogen-activated protein kinase binding"/>
    <property type="evidence" value="ECO:0000318"/>
    <property type="project" value="GO_Central"/>
</dbReference>
<dbReference type="GO" id="GO:0002039">
    <property type="term" value="F:p53 binding"/>
    <property type="evidence" value="ECO:0000314"/>
    <property type="project" value="UniProtKB"/>
</dbReference>
<dbReference type="GO" id="GO:0106310">
    <property type="term" value="F:protein serine kinase activity"/>
    <property type="evidence" value="ECO:0007669"/>
    <property type="project" value="RHEA"/>
</dbReference>
<dbReference type="GO" id="GO:0004674">
    <property type="term" value="F:protein serine/threonine kinase activity"/>
    <property type="evidence" value="ECO:0000314"/>
    <property type="project" value="UniProtKB"/>
</dbReference>
<dbReference type="GO" id="GO:0090398">
    <property type="term" value="P:cellular senescence"/>
    <property type="evidence" value="ECO:0000304"/>
    <property type="project" value="Reactome"/>
</dbReference>
<dbReference type="GO" id="GO:0032007">
    <property type="term" value="P:negative regulation of TOR signaling"/>
    <property type="evidence" value="ECO:0000250"/>
    <property type="project" value="UniProtKB"/>
</dbReference>
<dbReference type="GO" id="GO:0060999">
    <property type="term" value="P:positive regulation of dendritic spine development"/>
    <property type="evidence" value="ECO:0007669"/>
    <property type="project" value="Ensembl"/>
</dbReference>
<dbReference type="GO" id="GO:0032206">
    <property type="term" value="P:positive regulation of telomere maintenance"/>
    <property type="evidence" value="ECO:0000315"/>
    <property type="project" value="BHF-UCL"/>
</dbReference>
<dbReference type="GO" id="GO:0045944">
    <property type="term" value="P:positive regulation of transcription by RNA polymerase II"/>
    <property type="evidence" value="ECO:0000315"/>
    <property type="project" value="BHF-UCL"/>
</dbReference>
<dbReference type="GO" id="GO:0046777">
    <property type="term" value="P:protein autophosphorylation"/>
    <property type="evidence" value="ECO:0000314"/>
    <property type="project" value="UniProtKB"/>
</dbReference>
<dbReference type="GO" id="GO:0007265">
    <property type="term" value="P:Ras protein signal transduction"/>
    <property type="evidence" value="ECO:0000314"/>
    <property type="project" value="UniProtKB"/>
</dbReference>
<dbReference type="GO" id="GO:1901796">
    <property type="term" value="P:regulation of signal transduction by p53 class mediator"/>
    <property type="evidence" value="ECO:0000304"/>
    <property type="project" value="Reactome"/>
</dbReference>
<dbReference type="GO" id="GO:0006417">
    <property type="term" value="P:regulation of translation"/>
    <property type="evidence" value="ECO:0000314"/>
    <property type="project" value="UniProtKB"/>
</dbReference>
<dbReference type="GO" id="GO:0007165">
    <property type="term" value="P:signal transduction"/>
    <property type="evidence" value="ECO:0000304"/>
    <property type="project" value="ProtInc"/>
</dbReference>
<dbReference type="GO" id="GO:0090400">
    <property type="term" value="P:stress-induced premature senescence"/>
    <property type="evidence" value="ECO:0000314"/>
    <property type="project" value="UniProtKB"/>
</dbReference>
<dbReference type="CDD" id="cd14171">
    <property type="entry name" value="STKc_MAPKAPK5"/>
    <property type="match status" value="1"/>
</dbReference>
<dbReference type="FunFam" id="4.10.1170.10:FF:000002">
    <property type="entry name" value="MAP kinase-activated protein kinase 5"/>
    <property type="match status" value="1"/>
</dbReference>
<dbReference type="FunFam" id="1.10.510.10:FF:000179">
    <property type="entry name" value="MAP kinase-activated protein kinase 5 isoform X1"/>
    <property type="match status" value="1"/>
</dbReference>
<dbReference type="FunFam" id="3.30.200.20:FF:000209">
    <property type="entry name" value="MAP kinase-activated protein kinase 5 isoform X1"/>
    <property type="match status" value="1"/>
</dbReference>
<dbReference type="Gene3D" id="4.10.1170.10">
    <property type="entry name" value="MAP kinase activated protein kinase 2"/>
    <property type="match status" value="1"/>
</dbReference>
<dbReference type="Gene3D" id="3.30.200.20">
    <property type="entry name" value="Phosphorylase Kinase, domain 1"/>
    <property type="match status" value="1"/>
</dbReference>
<dbReference type="Gene3D" id="1.10.510.10">
    <property type="entry name" value="Transferase(Phosphotransferase) domain 1"/>
    <property type="match status" value="1"/>
</dbReference>
<dbReference type="InterPro" id="IPR050205">
    <property type="entry name" value="CDPK_Ser/Thr_kinases"/>
</dbReference>
<dbReference type="InterPro" id="IPR011009">
    <property type="entry name" value="Kinase-like_dom_sf"/>
</dbReference>
<dbReference type="InterPro" id="IPR027442">
    <property type="entry name" value="MAPKAPK_C"/>
</dbReference>
<dbReference type="InterPro" id="IPR000719">
    <property type="entry name" value="Prot_kinase_dom"/>
</dbReference>
<dbReference type="InterPro" id="IPR008271">
    <property type="entry name" value="Ser/Thr_kinase_AS"/>
</dbReference>
<dbReference type="PANTHER" id="PTHR24349">
    <property type="entry name" value="SERINE/THREONINE-PROTEIN KINASE"/>
    <property type="match status" value="1"/>
</dbReference>
<dbReference type="Pfam" id="PF00069">
    <property type="entry name" value="Pkinase"/>
    <property type="match status" value="1"/>
</dbReference>
<dbReference type="SMART" id="SM00220">
    <property type="entry name" value="S_TKc"/>
    <property type="match status" value="1"/>
</dbReference>
<dbReference type="SUPFAM" id="SSF56112">
    <property type="entry name" value="Protein kinase-like (PK-like)"/>
    <property type="match status" value="1"/>
</dbReference>
<dbReference type="PROSITE" id="PS50011">
    <property type="entry name" value="PROTEIN_KINASE_DOM"/>
    <property type="match status" value="1"/>
</dbReference>
<dbReference type="PROSITE" id="PS00108">
    <property type="entry name" value="PROTEIN_KINASE_ST"/>
    <property type="match status" value="1"/>
</dbReference>
<accession>Q8IW41</accession>
<accession>B3KVA5</accession>
<accession>O60491</accession>
<accession>Q86X46</accession>
<accession>Q9BVX9</accession>
<accession>Q9UG86</accession>
<reference key="1">
    <citation type="journal article" date="1998" name="EMBO J.">
        <title>PRAK, a novel protein kinase regulated by the p38 MAP kinase.</title>
        <authorList>
            <person name="New L."/>
            <person name="Jiang Y."/>
            <person name="Zhao M."/>
            <person name="Liu K."/>
            <person name="Zhu W."/>
            <person name="Flood L.J."/>
            <person name="Kato Y."/>
            <person name="Parry G.C.N."/>
            <person name="Han J."/>
        </authorList>
    </citation>
    <scope>NUCLEOTIDE SEQUENCE [GENOMIC DNA] (ISOFORM 2)</scope>
    <scope>MUTAGENESIS OF THR-182</scope>
    <scope>FUNCTION</scope>
    <scope>TISSUE SPECIFICITY</scope>
    <scope>PHOSPHORYLATION AT THR-182</scope>
    <scope>ACTIVITY REGULATION</scope>
    <source>
        <tissue>Placenta</tissue>
    </source>
</reference>
<reference key="2">
    <citation type="journal article" date="2004" name="Nat. Genet.">
        <title>Complete sequencing and characterization of 21,243 full-length human cDNAs.</title>
        <authorList>
            <person name="Ota T."/>
            <person name="Suzuki Y."/>
            <person name="Nishikawa T."/>
            <person name="Otsuki T."/>
            <person name="Sugiyama T."/>
            <person name="Irie R."/>
            <person name="Wakamatsu A."/>
            <person name="Hayashi K."/>
            <person name="Sato H."/>
            <person name="Nagai K."/>
            <person name="Kimura K."/>
            <person name="Makita H."/>
            <person name="Sekine M."/>
            <person name="Obayashi M."/>
            <person name="Nishi T."/>
            <person name="Shibahara T."/>
            <person name="Tanaka T."/>
            <person name="Ishii S."/>
            <person name="Yamamoto J."/>
            <person name="Saito K."/>
            <person name="Kawai Y."/>
            <person name="Isono Y."/>
            <person name="Nakamura Y."/>
            <person name="Nagahari K."/>
            <person name="Murakami K."/>
            <person name="Yasuda T."/>
            <person name="Iwayanagi T."/>
            <person name="Wagatsuma M."/>
            <person name="Shiratori A."/>
            <person name="Sudo H."/>
            <person name="Hosoiri T."/>
            <person name="Kaku Y."/>
            <person name="Kodaira H."/>
            <person name="Kondo H."/>
            <person name="Sugawara M."/>
            <person name="Takahashi M."/>
            <person name="Kanda K."/>
            <person name="Yokoi T."/>
            <person name="Furuya T."/>
            <person name="Kikkawa E."/>
            <person name="Omura Y."/>
            <person name="Abe K."/>
            <person name="Kamihara K."/>
            <person name="Katsuta N."/>
            <person name="Sato K."/>
            <person name="Tanikawa M."/>
            <person name="Yamazaki M."/>
            <person name="Ninomiya K."/>
            <person name="Ishibashi T."/>
            <person name="Yamashita H."/>
            <person name="Murakawa K."/>
            <person name="Fujimori K."/>
            <person name="Tanai H."/>
            <person name="Kimata M."/>
            <person name="Watanabe M."/>
            <person name="Hiraoka S."/>
            <person name="Chiba Y."/>
            <person name="Ishida S."/>
            <person name="Ono Y."/>
            <person name="Takiguchi S."/>
            <person name="Watanabe S."/>
            <person name="Yosida M."/>
            <person name="Hotuta T."/>
            <person name="Kusano J."/>
            <person name="Kanehori K."/>
            <person name="Takahashi-Fujii A."/>
            <person name="Hara H."/>
            <person name="Tanase T.-O."/>
            <person name="Nomura Y."/>
            <person name="Togiya S."/>
            <person name="Komai F."/>
            <person name="Hara R."/>
            <person name="Takeuchi K."/>
            <person name="Arita M."/>
            <person name="Imose N."/>
            <person name="Musashino K."/>
            <person name="Yuuki H."/>
            <person name="Oshima A."/>
            <person name="Sasaki N."/>
            <person name="Aotsuka S."/>
            <person name="Yoshikawa Y."/>
            <person name="Matsunawa H."/>
            <person name="Ichihara T."/>
            <person name="Shiohata N."/>
            <person name="Sano S."/>
            <person name="Moriya S."/>
            <person name="Momiyama H."/>
            <person name="Satoh N."/>
            <person name="Takami S."/>
            <person name="Terashima Y."/>
            <person name="Suzuki O."/>
            <person name="Nakagawa S."/>
            <person name="Senoh A."/>
            <person name="Mizoguchi H."/>
            <person name="Goto Y."/>
            <person name="Shimizu F."/>
            <person name="Wakebe H."/>
            <person name="Hishigaki H."/>
            <person name="Watanabe T."/>
            <person name="Sugiyama A."/>
            <person name="Takemoto M."/>
            <person name="Kawakami B."/>
            <person name="Yamazaki M."/>
            <person name="Watanabe K."/>
            <person name="Kumagai A."/>
            <person name="Itakura S."/>
            <person name="Fukuzumi Y."/>
            <person name="Fujimori Y."/>
            <person name="Komiyama M."/>
            <person name="Tashiro H."/>
            <person name="Tanigami A."/>
            <person name="Fujiwara T."/>
            <person name="Ono T."/>
            <person name="Yamada K."/>
            <person name="Fujii Y."/>
            <person name="Ozaki K."/>
            <person name="Hirao M."/>
            <person name="Ohmori Y."/>
            <person name="Kawabata A."/>
            <person name="Hikiji T."/>
            <person name="Kobatake N."/>
            <person name="Inagaki H."/>
            <person name="Ikema Y."/>
            <person name="Okamoto S."/>
            <person name="Okitani R."/>
            <person name="Kawakami T."/>
            <person name="Noguchi S."/>
            <person name="Itoh T."/>
            <person name="Shigeta K."/>
            <person name="Senba T."/>
            <person name="Matsumura K."/>
            <person name="Nakajima Y."/>
            <person name="Mizuno T."/>
            <person name="Morinaga M."/>
            <person name="Sasaki M."/>
            <person name="Togashi T."/>
            <person name="Oyama M."/>
            <person name="Hata H."/>
            <person name="Watanabe M."/>
            <person name="Komatsu T."/>
            <person name="Mizushima-Sugano J."/>
            <person name="Satoh T."/>
            <person name="Shirai Y."/>
            <person name="Takahashi Y."/>
            <person name="Nakagawa K."/>
            <person name="Okumura K."/>
            <person name="Nagase T."/>
            <person name="Nomura N."/>
            <person name="Kikuchi H."/>
            <person name="Masuho Y."/>
            <person name="Yamashita R."/>
            <person name="Nakai K."/>
            <person name="Yada T."/>
            <person name="Nakamura Y."/>
            <person name="Ohara O."/>
            <person name="Isogai T."/>
            <person name="Sugano S."/>
        </authorList>
    </citation>
    <scope>NUCLEOTIDE SEQUENCE [LARGE SCALE MRNA] (ISOFORM 2)</scope>
</reference>
<reference key="3">
    <citation type="submission" date="2005-07" db="EMBL/GenBank/DDBJ databases">
        <authorList>
            <person name="Mural R.J."/>
            <person name="Istrail S."/>
            <person name="Sutton G.G."/>
            <person name="Florea L."/>
            <person name="Halpern A.L."/>
            <person name="Mobarry C.M."/>
            <person name="Lippert R."/>
            <person name="Walenz B."/>
            <person name="Shatkay H."/>
            <person name="Dew I."/>
            <person name="Miller J.R."/>
            <person name="Flanigan M.J."/>
            <person name="Edwards N.J."/>
            <person name="Bolanos R."/>
            <person name="Fasulo D."/>
            <person name="Halldorsson B.V."/>
            <person name="Hannenhalli S."/>
            <person name="Turner R."/>
            <person name="Yooseph S."/>
            <person name="Lu F."/>
            <person name="Nusskern D.R."/>
            <person name="Shue B.C."/>
            <person name="Zheng X.H."/>
            <person name="Zhong F."/>
            <person name="Delcher A.L."/>
            <person name="Huson D.H."/>
            <person name="Kravitz S.A."/>
            <person name="Mouchard L."/>
            <person name="Reinert K."/>
            <person name="Remington K.A."/>
            <person name="Clark A.G."/>
            <person name="Waterman M.S."/>
            <person name="Eichler E.E."/>
            <person name="Adams M.D."/>
            <person name="Hunkapiller M.W."/>
            <person name="Myers E.W."/>
            <person name="Venter J.C."/>
        </authorList>
    </citation>
    <scope>NUCLEOTIDE SEQUENCE [LARGE SCALE GENOMIC DNA]</scope>
</reference>
<reference key="4">
    <citation type="journal article" date="2004" name="Genome Res.">
        <title>The status, quality, and expansion of the NIH full-length cDNA project: the Mammalian Gene Collection (MGC).</title>
        <authorList>
            <consortium name="The MGC Project Team"/>
        </authorList>
    </citation>
    <scope>NUCLEOTIDE SEQUENCE [LARGE SCALE MRNA] (ISOFORMS 1 AND 2)</scope>
    <source>
        <tissue>Cervix</tissue>
        <tissue>Pancreas</tissue>
        <tissue>Placenta</tissue>
    </source>
</reference>
<reference key="5">
    <citation type="journal article" date="2007" name="BMC Genomics">
        <title>The full-ORF clone resource of the German cDNA consortium.</title>
        <authorList>
            <person name="Bechtel S."/>
            <person name="Rosenfelder H."/>
            <person name="Duda A."/>
            <person name="Schmidt C.P."/>
            <person name="Ernst U."/>
            <person name="Wellenreuther R."/>
            <person name="Mehrle A."/>
            <person name="Schuster C."/>
            <person name="Bahr A."/>
            <person name="Bloecker H."/>
            <person name="Heubner D."/>
            <person name="Hoerlein A."/>
            <person name="Michel G."/>
            <person name="Wedler H."/>
            <person name="Koehrer K."/>
            <person name="Ottenwaelder B."/>
            <person name="Poustka A."/>
            <person name="Wiemann S."/>
            <person name="Schupp I."/>
        </authorList>
    </citation>
    <scope>NUCLEOTIDE SEQUENCE [LARGE SCALE MRNA] OF 133-473 (ISOFORM 2)</scope>
    <source>
        <tissue>Brain</tissue>
    </source>
</reference>
<reference key="6">
    <citation type="journal article" date="2000" name="Biochem. Biophys. Res. Commun.">
        <title>p62 functions as a p38 MAP kinase regulator.</title>
        <authorList>
            <person name="Sudo T."/>
            <person name="Maruyama M."/>
            <person name="Osada H."/>
        </authorList>
    </citation>
    <scope>INTERACTION WITH SQSTM1</scope>
    <scope>ACTIVITY REGULATION</scope>
    <scope>SUBCELLULAR LOCATION</scope>
</reference>
<reference key="7">
    <citation type="journal article" date="2003" name="Mol. Biol. Cell">
        <title>Regulation of PRAK subcellular location by p38 MAP kinases.</title>
        <authorList>
            <person name="New L."/>
            <person name="Jiang Y."/>
            <person name="Han J."/>
        </authorList>
    </citation>
    <scope>SUBCELLULAR LOCATION</scope>
    <scope>PHOSPHORYLATION AT SER-212</scope>
    <scope>MUTAGENESIS OF THR-182</scope>
    <scope>MUTAGENESIS OF LYS-51; THR-182 AND SER-212</scope>
</reference>
<reference key="8">
    <citation type="journal article" date="2007" name="Cell. Signal.">
        <title>14-3-3epsilon inhibits MK5-mediated cell migration by disrupting F-actin polymerization.</title>
        <authorList>
            <person name="Tak H."/>
            <person name="Jang E."/>
            <person name="Kim S.B."/>
            <person name="Park J."/>
            <person name="Suk J."/>
            <person name="Yoon Y.S."/>
            <person name="Ahn J.K."/>
            <person name="Lee J.H."/>
            <person name="Joe C.O."/>
        </authorList>
    </citation>
    <scope>FUNCTION IN PHOSPHORYLATION OF HSPB1</scope>
    <scope>INTERACTION WITH YWHAE</scope>
</reference>
<reference key="9">
    <citation type="journal article" date="2008" name="Proc. Natl. Acad. Sci. U.S.A.">
        <title>A quantitative atlas of mitotic phosphorylation.</title>
        <authorList>
            <person name="Dephoure N."/>
            <person name="Zhou C."/>
            <person name="Villen J."/>
            <person name="Beausoleil S.A."/>
            <person name="Bakalarski C.E."/>
            <person name="Elledge S.J."/>
            <person name="Gygi S.P."/>
        </authorList>
    </citation>
    <scope>IDENTIFICATION BY MASS SPECTROMETRY [LARGE SCALE ANALYSIS]</scope>
    <source>
        <tissue>Cervix carcinoma</tissue>
    </source>
</reference>
<reference key="10">
    <citation type="journal article" date="2009" name="Anal. Chem.">
        <title>Lys-N and trypsin cover complementary parts of the phosphoproteome in a refined SCX-based approach.</title>
        <authorList>
            <person name="Gauci S."/>
            <person name="Helbig A.O."/>
            <person name="Slijper M."/>
            <person name="Krijgsveld J."/>
            <person name="Heck A.J."/>
            <person name="Mohammed S."/>
        </authorList>
    </citation>
    <scope>IDENTIFICATION BY MASS SPECTROMETRY [LARGE SCALE ANALYSIS]</scope>
</reference>
<reference key="11">
    <citation type="journal article" date="2009" name="Cell. Signal.">
        <title>PKA-induced F-actin rearrangement requires phosphorylation of Hsp27 by the MAPKAP kinase MK5.</title>
        <authorList>
            <person name="Kostenko S."/>
            <person name="Johannessen M."/>
            <person name="Moens U."/>
        </authorList>
    </citation>
    <scope>FUNCTION IN PHOSPHORYLATION OF HSPB1</scope>
</reference>
<reference key="12">
    <citation type="journal article" date="2009" name="Sci. Signal.">
        <title>Quantitative phosphoproteomic analysis of T cell receptor signaling reveals system-wide modulation of protein-protein interactions.</title>
        <authorList>
            <person name="Mayya V."/>
            <person name="Lundgren D.H."/>
            <person name="Hwang S.-I."/>
            <person name="Rezaul K."/>
            <person name="Wu L."/>
            <person name="Eng J.K."/>
            <person name="Rodionov V."/>
            <person name="Han D.K."/>
        </authorList>
    </citation>
    <scope>PHOSPHORYLATION [LARGE SCALE ANALYSIS] AT THR-182</scope>
    <scope>IDENTIFICATION BY MASS SPECTROMETRY [LARGE SCALE ANALYSIS]</scope>
    <source>
        <tissue>Leukemic T-cell</tissue>
    </source>
</reference>
<reference key="13">
    <citation type="journal article" date="2013" name="J. Proteome Res.">
        <title>Toward a comprehensive characterization of a human cancer cell phosphoproteome.</title>
        <authorList>
            <person name="Zhou H."/>
            <person name="Di Palma S."/>
            <person name="Preisinger C."/>
            <person name="Peng M."/>
            <person name="Polat A.N."/>
            <person name="Heck A.J."/>
            <person name="Mohammed S."/>
        </authorList>
    </citation>
    <scope>PHOSPHORYLATION [LARGE SCALE ANALYSIS] AT THR-182 AND SER-354</scope>
    <scope>IDENTIFICATION BY MASS SPECTROMETRY [LARGE SCALE ANALYSIS]</scope>
    <source>
        <tissue>Cervix carcinoma</tissue>
        <tissue>Erythroleukemia</tissue>
    </source>
</reference>
<reference key="14">
    <citation type="journal article" date="2007" name="Nature">
        <title>Patterns of somatic mutation in human cancer genomes.</title>
        <authorList>
            <person name="Greenman C."/>
            <person name="Stephens P."/>
            <person name="Smith R."/>
            <person name="Dalgliesh G.L."/>
            <person name="Hunter C."/>
            <person name="Bignell G."/>
            <person name="Davies H."/>
            <person name="Teague J."/>
            <person name="Butler A."/>
            <person name="Stevens C."/>
            <person name="Edkins S."/>
            <person name="O'Meara S."/>
            <person name="Vastrik I."/>
            <person name="Schmidt E.E."/>
            <person name="Avis T."/>
            <person name="Barthorpe S."/>
            <person name="Bhamra G."/>
            <person name="Buck G."/>
            <person name="Choudhury B."/>
            <person name="Clements J."/>
            <person name="Cole J."/>
            <person name="Dicks E."/>
            <person name="Forbes S."/>
            <person name="Gray K."/>
            <person name="Halliday K."/>
            <person name="Harrison R."/>
            <person name="Hills K."/>
            <person name="Hinton J."/>
            <person name="Jenkinson A."/>
            <person name="Jones D."/>
            <person name="Menzies A."/>
            <person name="Mironenko T."/>
            <person name="Perry J."/>
            <person name="Raine K."/>
            <person name="Richardson D."/>
            <person name="Shepherd R."/>
            <person name="Small A."/>
            <person name="Tofts C."/>
            <person name="Varian J."/>
            <person name="Webb T."/>
            <person name="West S."/>
            <person name="Widaa S."/>
            <person name="Yates A."/>
            <person name="Cahill D.P."/>
            <person name="Louis D.N."/>
            <person name="Goldstraw P."/>
            <person name="Nicholson A.G."/>
            <person name="Brasseur F."/>
            <person name="Looijenga L."/>
            <person name="Weber B.L."/>
            <person name="Chiew Y.-E."/>
            <person name="DeFazio A."/>
            <person name="Greaves M.F."/>
            <person name="Green A.R."/>
            <person name="Campbell P."/>
            <person name="Birney E."/>
            <person name="Easton D.F."/>
            <person name="Chenevix-Trench G."/>
            <person name="Tan M.-H."/>
            <person name="Khoo S.K."/>
            <person name="Teh B.T."/>
            <person name="Yuen S.T."/>
            <person name="Leung S.Y."/>
            <person name="Wooster R."/>
            <person name="Futreal P.A."/>
            <person name="Stratton M.R."/>
        </authorList>
    </citation>
    <scope>VARIANTS [LARGE SCALE ANALYSIS] ILE-67 AND LYS-282</scope>
</reference>
<reference key="15">
    <citation type="journal article" date="2007" name="Cell">
        <title>PRAK is essential for ras-induced senescence and tumor suppression.</title>
        <authorList>
            <person name="Sun P."/>
            <person name="Yoshizuka N."/>
            <person name="New L."/>
            <person name="Moser B.A."/>
            <person name="Li Y."/>
            <person name="Liao R."/>
            <person name="Xie C."/>
            <person name="Chen J."/>
            <person name="Deng Q."/>
            <person name="Yamout M."/>
            <person name="Dong M.Q."/>
            <person name="Frangou C.G."/>
            <person name="Yates J.R. III"/>
            <person name="Wright P.E."/>
            <person name="Han J."/>
        </authorList>
    </citation>
    <scope>FUNCTION IN PHOSPHORYLATION OF TP53</scope>
</reference>
<reference key="16">
    <citation type="journal article" date="2011" name="Mol. Cell">
        <title>The MK5/PRAK kinase and Myc form a negative feedback loop that is disrupted during colorectal tumorigenesis.</title>
        <authorList>
            <person name="Kress T.R."/>
            <person name="Cannell I.G."/>
            <person name="Brenkman A.B."/>
            <person name="Samans B."/>
            <person name="Gaestel M."/>
            <person name="Roepman P."/>
            <person name="Burgering B.M."/>
            <person name="Bushell M."/>
            <person name="Rosenwald A."/>
            <person name="Eilers M."/>
        </authorList>
    </citation>
    <scope>FUNCTION IN PHOSPHORYLATION OF FOXO3</scope>
    <scope>AUTOPHOSPHORYLATION</scope>
    <scope>INDUCTION</scope>
    <scope>MUTAGENESIS OF THR-182 AND LEU-337</scope>
</reference>
<reference key="17">
    <citation type="journal article" date="2010" name="Cell. Signal.">
        <title>Mitogen-activated protein kinase p38 and MK2, MK3 and MK5: menage a trois or menage a quatre?</title>
        <authorList>
            <person name="Shiryaev A."/>
            <person name="Moens U."/>
        </authorList>
    </citation>
    <scope>REVIEW</scope>
</reference>
<reference key="18">
    <citation type="journal article" date="2021" name="Genet. Med.">
        <title>Biallelic truncating variants in MAPKAPK5 cause a new developmental disorder involving neurological, cardiac, and facial anomalies combined with synpolydactyly.</title>
        <authorList>
            <person name="Horn D."/>
            <person name="Fernandez-Nunez E."/>
            <person name="Gomez-Carmona R."/>
            <person name="Rivera-Barahona A."/>
            <person name="Nevado J."/>
            <person name="Schwartzmann S."/>
            <person name="Ehmke N."/>
            <person name="Lapunzina P."/>
            <person name="Otaify G.A."/>
            <person name="Temtamy S."/>
            <person name="Aglan M."/>
            <person name="Boschann F."/>
            <person name="Ruiz-Perez V.L."/>
        </authorList>
    </citation>
    <scope>INVOLVEMENT IN NCFD</scope>
</reference>
<gene>
    <name type="primary">MAPKAPK5</name>
    <name type="synonym">PRAK</name>
</gene>
<organism>
    <name type="scientific">Homo sapiens</name>
    <name type="common">Human</name>
    <dbReference type="NCBI Taxonomy" id="9606"/>
    <lineage>
        <taxon>Eukaryota</taxon>
        <taxon>Metazoa</taxon>
        <taxon>Chordata</taxon>
        <taxon>Craniata</taxon>
        <taxon>Vertebrata</taxon>
        <taxon>Euteleostomi</taxon>
        <taxon>Mammalia</taxon>
        <taxon>Eutheria</taxon>
        <taxon>Euarchontoglires</taxon>
        <taxon>Primates</taxon>
        <taxon>Haplorrhini</taxon>
        <taxon>Catarrhini</taxon>
        <taxon>Hominidae</taxon>
        <taxon>Homo</taxon>
    </lineage>
</organism>
<keyword id="KW-0025">Alternative splicing</keyword>
<keyword id="KW-0067">ATP-binding</keyword>
<keyword id="KW-0175">Coiled coil</keyword>
<keyword id="KW-0963">Cytoplasm</keyword>
<keyword id="KW-0418">Kinase</keyword>
<keyword id="KW-0547">Nucleotide-binding</keyword>
<keyword id="KW-0539">Nucleus</keyword>
<keyword id="KW-0597">Phosphoprotein</keyword>
<keyword id="KW-1267">Proteomics identification</keyword>
<keyword id="KW-1185">Reference proteome</keyword>
<keyword id="KW-0723">Serine/threonine-protein kinase</keyword>
<keyword id="KW-0808">Transferase</keyword>
<keyword id="KW-0043">Tumor suppressor</keyword>
<comment type="function">
    <text evidence="8 10 11 12 14">Tumor suppressor serine/threonine-protein kinase involved in mTORC1 signaling and post-transcriptional regulation. Phosphorylates FOXO3, ERK3/MAPK6, ERK4/MAPK4, HSP27/HSPB1, p53/TP53 and RHEB. Acts as a tumor suppressor by mediating Ras-induced senescence and phosphorylating p53/TP53. Involved in post-transcriptional regulation of MYC by mediating phosphorylation of FOXO3: phosphorylation of FOXO3 leads to promote nuclear localization of FOXO3, enabling expression of miR-34b and miR-34c, 2 post-transcriptional regulators of MYC that bind to the 3'UTR of MYC transcript and prevent MYC translation. Acts as a negative regulator of mTORC1 signaling by mediating phosphorylation and inhibition of RHEB. Part of the atypical MAPK signaling via its interaction with ERK3/MAPK6 or ERK4/MAPK4: the precise role of the complex formed with ERK3/MAPK6 or ERK4/MAPK4 is still unclear, but the complex follows a complex set of phosphorylation events: upon interaction with atypical MAPK (ERK3/MAPK6 or ERK4/MAPK4), ERK3/MAPK6 (or ERK4/MAPK4) is phosphorylated and then mediates phosphorylation and activation of MAPKAPK5, which in turn phosphorylates ERK3/MAPK6 (or ERK4/MAPK4). Mediates phosphorylation of HSP27/HSPB1 in response to PKA/PRKACA stimulation, inducing F-actin rearrangement.</text>
</comment>
<comment type="catalytic activity">
    <reaction>
        <text>L-seryl-[protein] + ATP = O-phospho-L-seryl-[protein] + ADP + H(+)</text>
        <dbReference type="Rhea" id="RHEA:17989"/>
        <dbReference type="Rhea" id="RHEA-COMP:9863"/>
        <dbReference type="Rhea" id="RHEA-COMP:11604"/>
        <dbReference type="ChEBI" id="CHEBI:15378"/>
        <dbReference type="ChEBI" id="CHEBI:29999"/>
        <dbReference type="ChEBI" id="CHEBI:30616"/>
        <dbReference type="ChEBI" id="CHEBI:83421"/>
        <dbReference type="ChEBI" id="CHEBI:456216"/>
        <dbReference type="EC" id="2.7.11.1"/>
    </reaction>
</comment>
<comment type="catalytic activity">
    <reaction>
        <text>L-threonyl-[protein] + ATP = O-phospho-L-threonyl-[protein] + ADP + H(+)</text>
        <dbReference type="Rhea" id="RHEA:46608"/>
        <dbReference type="Rhea" id="RHEA-COMP:11060"/>
        <dbReference type="Rhea" id="RHEA-COMP:11605"/>
        <dbReference type="ChEBI" id="CHEBI:15378"/>
        <dbReference type="ChEBI" id="CHEBI:30013"/>
        <dbReference type="ChEBI" id="CHEBI:30616"/>
        <dbReference type="ChEBI" id="CHEBI:61977"/>
        <dbReference type="ChEBI" id="CHEBI:456216"/>
        <dbReference type="EC" id="2.7.11.1"/>
    </reaction>
</comment>
<comment type="activity regulation">
    <text evidence="6 14">Activated following phosphorylation at Thr-182 by p38-alpha/MAPK14, p38-beta/MAPK11, ERK2/MAPK1, ERK3/MAPK6, and ERK4/MAPK4. Activated by stress-related extracellular stimuli; such as H(2)O(2), arsenite, anisomycin TNF alpha and also PMA and the calcium ionophore A23187; but to a lesser extent. In vitro, activated by SQSTM1. Inhibited by diterpenoid alkaloid noroxoaconitine.</text>
</comment>
<comment type="subunit">
    <text evidence="1 6 10">Interacts with ERK3/MAPK6 and ERK4/MAPK4 (via FRIEDE motif); the interaction is direct (By similarity). Interacts with YWHAE; the interaction prevents phosphorylation of HSP27/HSPB1 leading to disrupt F-actin polymerization. Interacts with SQSTM1.</text>
</comment>
<comment type="interaction">
    <interactant intactId="EBI-1201460">
        <id>Q8IW41</id>
    </interactant>
    <interactant intactId="EBI-1646426">
        <id>Q15109</id>
        <label>AGER</label>
    </interactant>
    <organismsDiffer>false</organismsDiffer>
    <experiments>6</experiments>
</comment>
<comment type="interaction">
    <interactant intactId="EBI-1201460">
        <id>Q8IW41</id>
    </interactant>
    <interactant intactId="EBI-352682">
        <id>P04792</id>
        <label>HSPB1</label>
    </interactant>
    <organismsDiffer>false</organismsDiffer>
    <experiments>2</experiments>
</comment>
<comment type="interaction">
    <interactant intactId="EBI-1201460">
        <id>Q8IW41</id>
    </interactant>
    <interactant intactId="EBI-1384105">
        <id>Q16659</id>
        <label>MAPK6</label>
    </interactant>
    <organismsDiffer>false</organismsDiffer>
    <experiments>12</experiments>
</comment>
<comment type="interaction">
    <interactant intactId="EBI-1201460">
        <id>Q8IW41</id>
    </interactant>
    <interactant intactId="EBI-366083">
        <id>P04637</id>
        <label>TP53</label>
    </interactant>
    <organismsDiffer>false</organismsDiffer>
    <experiments>2</experiments>
</comment>
<comment type="interaction">
    <interactant intactId="EBI-11958803">
        <id>Q8IW41-2</id>
    </interactant>
    <interactant intactId="EBI-1384105">
        <id>Q16659</id>
        <label>MAPK6</label>
    </interactant>
    <organismsDiffer>false</organismsDiffer>
    <experiments>6</experiments>
</comment>
<comment type="subcellular location">
    <subcellularLocation>
        <location>Cytoplasm</location>
    </subcellularLocation>
    <subcellularLocation>
        <location>Nucleus</location>
    </subcellularLocation>
    <text>Translocates to the cytoplasm following phosphorylation and activation. Interaction with ERK3/MAPK6 or ERK4/MAPK4 and phosphorylation at Thr-182, activates the protein kinase activity, followed by translocation to the cytoplasm. Phosphorylation by PKA/PRKACA at Ser-115 also induces nuclear export.</text>
</comment>
<comment type="alternative products">
    <event type="alternative splicing"/>
    <isoform>
        <id>Q8IW41-1</id>
        <name>1</name>
        <sequence type="displayed"/>
    </isoform>
    <isoform>
        <id>Q8IW41-2</id>
        <name>2</name>
        <sequence type="described" ref="VSP_011597"/>
    </isoform>
</comment>
<comment type="tissue specificity">
    <text evidence="14">Expressed ubiquitously.</text>
</comment>
<comment type="induction">
    <text evidence="12">Directly regulated by MYC: expression is activated by MYC, suggesting the existence of a feedback regulatory loop.</text>
</comment>
<comment type="PTM">
    <text evidence="1">Phosphorylated on Thr-182 ERK3/MAPK6 or ERK4/MAPK4; which is the regulatory phosphorylation site and is located on the T-loop/loop 12, leading to activation. Phosphorylation at Thr-182 by p38-alpha/MAPK14, p38-beta/MAPK11 is subject to debate. Phosphorylated at Ser-115 by PKA/PRKACA, leading to localization to the cytoplasm. Autophosphorylated (By similarity).</text>
</comment>
<comment type="disease" evidence="13">
    <disease id="DI-06420">
        <name>Neurocardiofaciodigital syndrome</name>
        <acronym>NCFD</acronym>
        <description>An autosomal recessive syndrome characterized by severe developmental delay, variable brain anomalies, congenital heart defects, dysmorphic facial features, and a distinctive type of synpolydactyly with a supernumerary hypoplastic digit between the fourth and fifth digits of the hands and/or feet. Other features include eye abnormalities, hearing impairment, and electroencephalogram anomalies.</description>
        <dbReference type="MIM" id="619869"/>
    </disease>
    <text>The disease is caused by variants affecting the gene represented in this entry.</text>
</comment>
<comment type="similarity">
    <text evidence="18">Belongs to the protein kinase superfamily. CAMK Ser/Thr protein kinase family.</text>
</comment>
<comment type="caution">
    <text evidence="18">The role of p38 MAPK kinases is unclear in phosphorylation and activation of MAPKAPK5. According to some reports, it interacts and is phosphorylated by p38-alpha/MAPK14 and p38-beta/MAPK11 (PubMed:12808055, PubMed:9628874). According to other reports, it is not activated by p38-alpha/MAPK14 and p38-beta/MAPK11. An explanation for these discrepancies, might be that the interaction with p38 MAPK kinases is weak and occurs only under specific conditions.</text>
</comment>
<feature type="chain" id="PRO_0000086296" description="MAP kinase-activated protein kinase 5">
    <location>
        <begin position="1"/>
        <end position="473"/>
    </location>
</feature>
<feature type="domain" description="Protein kinase" evidence="4">
    <location>
        <begin position="22"/>
        <end position="304"/>
    </location>
</feature>
<feature type="coiled-coil region" evidence="3">
    <location>
        <begin position="409"/>
        <end position="440"/>
    </location>
</feature>
<feature type="active site" description="Proton acceptor" evidence="4 5">
    <location>
        <position position="148"/>
    </location>
</feature>
<feature type="binding site" evidence="4">
    <location>
        <begin position="28"/>
        <end position="36"/>
    </location>
    <ligand>
        <name>ATP</name>
        <dbReference type="ChEBI" id="CHEBI:30616"/>
    </ligand>
</feature>
<feature type="binding site" evidence="4">
    <location>
        <position position="51"/>
    </location>
    <ligand>
        <name>ATP</name>
        <dbReference type="ChEBI" id="CHEBI:30616"/>
    </ligand>
</feature>
<feature type="modified residue" description="Phosphoserine; by PKA" evidence="2">
    <location>
        <position position="115"/>
    </location>
</feature>
<feature type="modified residue" description="Phosphothreonine; by MAPK11, MAPK14, MAPK4, MAPK6 and PKA" evidence="14 19 20">
    <location>
        <position position="182"/>
    </location>
</feature>
<feature type="modified residue" description="Phosphoserine" evidence="7">
    <location>
        <position position="212"/>
    </location>
</feature>
<feature type="modified residue" description="Phosphoserine" evidence="20">
    <location>
        <position position="354"/>
    </location>
</feature>
<feature type="splice variant" id="VSP_011597" description="In isoform 2." evidence="15 16 17">
    <location>
        <begin position="407"/>
        <end position="408"/>
    </location>
</feature>
<feature type="sequence variant" id="VAR_040758" description="In dbSNP:rs34132040." evidence="9">
    <original>M</original>
    <variation>I</variation>
    <location>
        <position position="67"/>
    </location>
</feature>
<feature type="sequence variant" id="VAR_040759" description="In dbSNP:rs34843470." evidence="9">
    <original>R</original>
    <variation>K</variation>
    <location>
        <position position="282"/>
    </location>
</feature>
<feature type="mutagenesis site" description="Kinase defective mutant, abolishes activity." evidence="7">
    <original>K</original>
    <variation>M</variation>
    <location>
        <position position="51"/>
    </location>
</feature>
<feature type="mutagenesis site" description="No p38-beta/MAPK11-induced activation." evidence="7 12 14">
    <original>T</original>
    <variation>A</variation>
    <location>
        <position position="182"/>
    </location>
</feature>
<feature type="mutagenesis site" description="Mimicks phosphorylation state and induces constitutive protein kinase activity." evidence="7 12 14">
    <original>T</original>
    <variation>D</variation>
    <location>
        <position position="182"/>
    </location>
</feature>
<feature type="mutagenesis site" description="Mimicks phosphorylation state and displays a slightly higher protein kinase activity." evidence="7">
    <original>S</original>
    <variation>D</variation>
    <location>
        <position position="212"/>
    </location>
</feature>
<feature type="mutagenesis site" description="Induces constitutive protein kinase activity." evidence="12">
    <original>L</original>
    <variation>G</variation>
    <location>
        <position position="337"/>
    </location>
</feature>
<feature type="sequence conflict" description="In Ref. 5; CAB53747." evidence="18" ref="5">
    <original>I</original>
    <variation>T</variation>
    <location>
        <position position="273"/>
    </location>
</feature>
<feature type="sequence conflict" description="In Ref. 1; AAC39863." evidence="18" ref="1">
    <original>E</original>
    <variation>R</variation>
    <location>
        <position position="291"/>
    </location>
</feature>
<name>MAPK5_HUMAN</name>
<proteinExistence type="evidence at protein level"/>
<protein>
    <recommendedName>
        <fullName>MAP kinase-activated protein kinase 5</fullName>
        <shortName>MAPK-activated protein kinase 5</shortName>
        <shortName>MAPKAP kinase 5</shortName>
        <shortName>MAPKAP-K5</shortName>
        <shortName>MAPKAPK-5</shortName>
        <shortName>MK-5</shortName>
        <shortName>MK5</shortName>
        <ecNumber>2.7.11.1</ecNumber>
    </recommendedName>
    <alternativeName>
        <fullName>p38-regulated/activated protein kinase</fullName>
        <shortName>PRAK</shortName>
    </alternativeName>
</protein>
<sequence length="473" mass="54220">MSEESDMDKAIKETSILEEYSINWTQKLGAGISGPVRVCVKKSTQERFALKILLDRPKARNEVRLHMMCATHPNIVQIIEVFANSVQFPHESSPRARLLIVMEMMEGGELFHRISQHRHFTEKQASQVTKQIALALRHCHLLNIAHRDLKPENLLFKDNSLDAPVKLCDFGFAKIDQGDLMTPQFTPYYVAPQVLEAQRRHQKEKSGIIPTSPTPYTYNKSCDLWSLGVIIYVMLCGYPPFYSKHHSRTIPKDMRRKIMTGSFEFPEEEWSQISEMAKDVVRKLLKVKPEERLTIEGVLDHPWLNSTEALDNVLPSAQLMMDKAVVAGIQQAHAEQLANMRIQDLKVSLKPLHSVNNPILRKRKLLGTKPKDSVYIHDHENGAEDSNVALEKLRDVIAQCILPQAGKGENEDEKLNEVMQEAWKYNRECKLLRDTLQSFSWNGRGFTDKVDRLKLAEIVKQVIEEQTTSHESQ</sequence>
<evidence type="ECO:0000250" key="1"/>
<evidence type="ECO:0000250" key="2">
    <source>
        <dbReference type="UniProtKB" id="O54992"/>
    </source>
</evidence>
<evidence type="ECO:0000255" key="3"/>
<evidence type="ECO:0000255" key="4">
    <source>
        <dbReference type="PROSITE-ProRule" id="PRU00159"/>
    </source>
</evidence>
<evidence type="ECO:0000255" key="5">
    <source>
        <dbReference type="PROSITE-ProRule" id="PRU10027"/>
    </source>
</evidence>
<evidence type="ECO:0000269" key="6">
    <source>
    </source>
</evidence>
<evidence type="ECO:0000269" key="7">
    <source>
    </source>
</evidence>
<evidence type="ECO:0000269" key="8">
    <source>
    </source>
</evidence>
<evidence type="ECO:0000269" key="9">
    <source>
    </source>
</evidence>
<evidence type="ECO:0000269" key="10">
    <source>
    </source>
</evidence>
<evidence type="ECO:0000269" key="11">
    <source>
    </source>
</evidence>
<evidence type="ECO:0000269" key="12">
    <source>
    </source>
</evidence>
<evidence type="ECO:0000269" key="13">
    <source>
    </source>
</evidence>
<evidence type="ECO:0000269" key="14">
    <source>
    </source>
</evidence>
<evidence type="ECO:0000303" key="15">
    <source>
    </source>
</evidence>
<evidence type="ECO:0000303" key="16">
    <source>
    </source>
</evidence>
<evidence type="ECO:0000303" key="17">
    <source>
    </source>
</evidence>
<evidence type="ECO:0000305" key="18"/>
<evidence type="ECO:0007744" key="19">
    <source>
    </source>
</evidence>
<evidence type="ECO:0007744" key="20">
    <source>
    </source>
</evidence>